<comment type="function">
    <text evidence="9 10 11">This receptor binds insulin-like growth factor 1 (IGF1) with a high affinity and IGF2 with a lower affinity. It has a tyrosine-protein kinase activity, which is necessary for the activation of the IGF1-stimulated downstream signaling cascade. Plays a role in oocyte maturation. Promotes head development by inhibiting Wnt signaling during embryogenesis.</text>
</comment>
<comment type="catalytic activity">
    <reaction evidence="6 11">
        <text>L-tyrosyl-[protein] + ATP = O-phospho-L-tyrosyl-[protein] + ADP + H(+)</text>
        <dbReference type="Rhea" id="RHEA:10596"/>
        <dbReference type="Rhea" id="RHEA-COMP:10136"/>
        <dbReference type="Rhea" id="RHEA-COMP:20101"/>
        <dbReference type="ChEBI" id="CHEBI:15378"/>
        <dbReference type="ChEBI" id="CHEBI:30616"/>
        <dbReference type="ChEBI" id="CHEBI:46858"/>
        <dbReference type="ChEBI" id="CHEBI:61978"/>
        <dbReference type="ChEBI" id="CHEBI:456216"/>
        <dbReference type="EC" id="2.7.10.1"/>
    </reaction>
</comment>
<comment type="cofactor">
    <cofactor evidence="1">
        <name>Mn(2+)</name>
        <dbReference type="ChEBI" id="CHEBI:29035"/>
    </cofactor>
</comment>
<comment type="activity regulation">
    <text evidence="2">Autophosphorylation activates the kinase activity.</text>
</comment>
<comment type="subunit">
    <text evidence="1">Tetramer of 2 alpha and 2 beta chains linked by disulfide bonds. The alpha chains contribute to the formation of the ligand-binding domain, while the beta chain carries the kinase domain (By similarity).</text>
</comment>
<comment type="interaction">
    <interactant intactId="EBI-8068109">
        <id>O73798</id>
    </interactant>
    <interactant intactId="EBI-8068143">
        <id>Q5HZ83</id>
        <label>gipc2.S</label>
    </interactant>
    <organismsDiffer>false</organismsDiffer>
    <experiments>2</experiments>
</comment>
<comment type="subcellular location">
    <subcellularLocation>
        <location evidence="10">Cell membrane</location>
        <topology evidence="10">Single-pass type I membrane protein</topology>
    </subcellularLocation>
    <text>Expressed at the oocyte surface.</text>
</comment>
<comment type="developmental stage">
    <text evidence="8 9 11">Expressed both maternally and zygotically. Shows biphasic expression during early development. Expressed ubiquitously in fertilized eggs and throughout the mid-blastula transition. Expression then decreases at mid-gastrulation. Shortly after gastrulation, expression is seen throughout the dorsal side of the embryo with expression strongest in the anterior and absent ventrally. Expression increases along the dorsal midline at early neurulation and is seen in the head region as neurulation progresses, particularly in the area of the cement gland primordium. Also present in the anterior mesoderm but is absent from the neural tube and the most ventral part of the embryo. Remains expressed throughout early embryogenesis. By the tailbud stages, expression is anterior, in the head and the most rostral part of the neural tube.</text>
</comment>
<comment type="PTM">
    <text>The cytoplasmic domain of the beta subunit is autophosphorylated on Tyr residues in response to low concentrations of insulin-like growth factor (IGF1) and higher concentrations of insulin.</text>
</comment>
<comment type="similarity">
    <text evidence="4">Belongs to the protein kinase superfamily. Tyr protein kinase family. Insulin receptor subfamily.</text>
</comment>
<dbReference type="EC" id="2.7.10.1"/>
<dbReference type="EMBL" id="AF055980">
    <property type="protein sequence ID" value="AAC12942.1"/>
    <property type="molecule type" value="mRNA"/>
</dbReference>
<dbReference type="RefSeq" id="NP_001081734.1">
    <property type="nucleotide sequence ID" value="NM_001088265.1"/>
</dbReference>
<dbReference type="SMR" id="O73798"/>
<dbReference type="IntAct" id="O73798">
    <property type="interactions" value="1"/>
</dbReference>
<dbReference type="MINT" id="O73798"/>
<dbReference type="GlyCosmos" id="O73798">
    <property type="glycosylation" value="17 sites, No reported glycans"/>
</dbReference>
<dbReference type="GeneID" id="398022"/>
<dbReference type="KEGG" id="xla:398022"/>
<dbReference type="AGR" id="Xenbase:XB-GENE-865040"/>
<dbReference type="CTD" id="398022"/>
<dbReference type="Xenbase" id="XB-GENE-865040">
    <property type="gene designation" value="igf1r.S"/>
</dbReference>
<dbReference type="OrthoDB" id="5809444at2759"/>
<dbReference type="Proteomes" id="UP000186698">
    <property type="component" value="Chromosome 3S"/>
</dbReference>
<dbReference type="Bgee" id="398022">
    <property type="expression patterns" value="Expressed in ovary and 16 other cell types or tissues"/>
</dbReference>
<dbReference type="GO" id="GO:0030424">
    <property type="term" value="C:axon"/>
    <property type="evidence" value="ECO:0000318"/>
    <property type="project" value="GO_Central"/>
</dbReference>
<dbReference type="GO" id="GO:0005899">
    <property type="term" value="C:insulin receptor complex"/>
    <property type="evidence" value="ECO:0000318"/>
    <property type="project" value="GO_Central"/>
</dbReference>
<dbReference type="GO" id="GO:0005886">
    <property type="term" value="C:plasma membrane"/>
    <property type="evidence" value="ECO:0000318"/>
    <property type="project" value="GO_Central"/>
</dbReference>
<dbReference type="GO" id="GO:0005524">
    <property type="term" value="F:ATP binding"/>
    <property type="evidence" value="ECO:0007669"/>
    <property type="project" value="UniProtKB-KW"/>
</dbReference>
<dbReference type="GO" id="GO:0005009">
    <property type="term" value="F:insulin receptor activity"/>
    <property type="evidence" value="ECO:0000318"/>
    <property type="project" value="GO_Central"/>
</dbReference>
<dbReference type="GO" id="GO:0043560">
    <property type="term" value="F:insulin receptor substrate binding"/>
    <property type="evidence" value="ECO:0000250"/>
    <property type="project" value="UniProtKB"/>
</dbReference>
<dbReference type="GO" id="GO:0005520">
    <property type="term" value="F:insulin-like growth factor binding"/>
    <property type="evidence" value="ECO:0000314"/>
    <property type="project" value="UniProtKB"/>
</dbReference>
<dbReference type="GO" id="GO:0005010">
    <property type="term" value="F:insulin-like growth factor receptor activity"/>
    <property type="evidence" value="ECO:0000314"/>
    <property type="project" value="UniProtKB"/>
</dbReference>
<dbReference type="GO" id="GO:0046872">
    <property type="term" value="F:metal ion binding"/>
    <property type="evidence" value="ECO:0007669"/>
    <property type="project" value="UniProtKB-KW"/>
</dbReference>
<dbReference type="GO" id="GO:0043548">
    <property type="term" value="F:phosphatidylinositol 3-kinase binding"/>
    <property type="evidence" value="ECO:0000250"/>
    <property type="project" value="UniProtKB"/>
</dbReference>
<dbReference type="GO" id="GO:0004713">
    <property type="term" value="F:protein tyrosine kinase activity"/>
    <property type="evidence" value="ECO:0000314"/>
    <property type="project" value="UniProtKB"/>
</dbReference>
<dbReference type="GO" id="GO:0005198">
    <property type="term" value="F:structural molecule activity"/>
    <property type="evidence" value="ECO:0000250"/>
    <property type="project" value="UniProtKB"/>
</dbReference>
<dbReference type="GO" id="GO:0071333">
    <property type="term" value="P:cellular response to glucose stimulus"/>
    <property type="evidence" value="ECO:0000318"/>
    <property type="project" value="GO_Central"/>
</dbReference>
<dbReference type="GO" id="GO:0008286">
    <property type="term" value="P:insulin receptor signaling pathway"/>
    <property type="evidence" value="ECO:0000318"/>
    <property type="project" value="GO_Central"/>
</dbReference>
<dbReference type="GO" id="GO:0048009">
    <property type="term" value="P:insulin-like growth factor receptor signaling pathway"/>
    <property type="evidence" value="ECO:0000314"/>
    <property type="project" value="UniProtKB"/>
</dbReference>
<dbReference type="GO" id="GO:0001556">
    <property type="term" value="P:oocyte maturation"/>
    <property type="evidence" value="ECO:0000270"/>
    <property type="project" value="UniProtKB"/>
</dbReference>
<dbReference type="GO" id="GO:0043410">
    <property type="term" value="P:positive regulation of MAPK cascade"/>
    <property type="evidence" value="ECO:0000318"/>
    <property type="project" value="GO_Central"/>
</dbReference>
<dbReference type="GO" id="GO:0051897">
    <property type="term" value="P:positive regulation of phosphatidylinositol 3-kinase/protein kinase B signal transduction"/>
    <property type="evidence" value="ECO:0000318"/>
    <property type="project" value="GO_Central"/>
</dbReference>
<dbReference type="GO" id="GO:0046777">
    <property type="term" value="P:protein autophosphorylation"/>
    <property type="evidence" value="ECO:0000314"/>
    <property type="project" value="UniProtKB"/>
</dbReference>
<dbReference type="GO" id="GO:0046328">
    <property type="term" value="P:regulation of JNK cascade"/>
    <property type="evidence" value="ECO:0000318"/>
    <property type="project" value="GO_Central"/>
</dbReference>
<dbReference type="CDD" id="cd00063">
    <property type="entry name" value="FN3"/>
    <property type="match status" value="3"/>
</dbReference>
<dbReference type="CDD" id="cd00064">
    <property type="entry name" value="FU"/>
    <property type="match status" value="1"/>
</dbReference>
<dbReference type="CDD" id="cd05032">
    <property type="entry name" value="PTKc_InsR_like"/>
    <property type="match status" value="1"/>
</dbReference>
<dbReference type="FunFam" id="1.10.510.10:FF:000050">
    <property type="entry name" value="Tyrosine-protein kinase receptor"/>
    <property type="match status" value="1"/>
</dbReference>
<dbReference type="FunFam" id="2.60.40.10:FF:000087">
    <property type="entry name" value="Tyrosine-protein kinase receptor"/>
    <property type="match status" value="1"/>
</dbReference>
<dbReference type="FunFam" id="2.60.40.10:FF:000108">
    <property type="entry name" value="Tyrosine-protein kinase receptor"/>
    <property type="match status" value="1"/>
</dbReference>
<dbReference type="FunFam" id="3.30.200.20:FF:000026">
    <property type="entry name" value="Tyrosine-protein kinase receptor"/>
    <property type="match status" value="1"/>
</dbReference>
<dbReference type="FunFam" id="3.80.20.20:FF:000001">
    <property type="entry name" value="Tyrosine-protein kinase receptor"/>
    <property type="match status" value="1"/>
</dbReference>
<dbReference type="FunFam" id="3.80.20.20:FF:000002">
    <property type="entry name" value="Tyrosine-protein kinase receptor"/>
    <property type="match status" value="1"/>
</dbReference>
<dbReference type="Gene3D" id="2.10.220.10">
    <property type="entry name" value="Hormone Receptor, Insulin-like Growth Factor Receptor 1, Chain A, domain 2"/>
    <property type="match status" value="1"/>
</dbReference>
<dbReference type="Gene3D" id="2.60.40.10">
    <property type="entry name" value="Immunoglobulins"/>
    <property type="match status" value="3"/>
</dbReference>
<dbReference type="Gene3D" id="3.30.200.20">
    <property type="entry name" value="Phosphorylase Kinase, domain 1"/>
    <property type="match status" value="1"/>
</dbReference>
<dbReference type="Gene3D" id="3.80.20.20">
    <property type="entry name" value="Receptor L-domain"/>
    <property type="match status" value="2"/>
</dbReference>
<dbReference type="Gene3D" id="1.10.510.10">
    <property type="entry name" value="Transferase(Phosphotransferase) domain 1"/>
    <property type="match status" value="1"/>
</dbReference>
<dbReference type="InterPro" id="IPR003961">
    <property type="entry name" value="FN3_dom"/>
</dbReference>
<dbReference type="InterPro" id="IPR036116">
    <property type="entry name" value="FN3_sf"/>
</dbReference>
<dbReference type="InterPro" id="IPR006211">
    <property type="entry name" value="Furin-like_Cys-rich_dom"/>
</dbReference>
<dbReference type="InterPro" id="IPR006212">
    <property type="entry name" value="Furin_repeat"/>
</dbReference>
<dbReference type="InterPro" id="IPR009030">
    <property type="entry name" value="Growth_fac_rcpt_cys_sf"/>
</dbReference>
<dbReference type="InterPro" id="IPR013783">
    <property type="entry name" value="Ig-like_fold"/>
</dbReference>
<dbReference type="InterPro" id="IPR011009">
    <property type="entry name" value="Kinase-like_dom_sf"/>
</dbReference>
<dbReference type="InterPro" id="IPR000719">
    <property type="entry name" value="Prot_kinase_dom"/>
</dbReference>
<dbReference type="InterPro" id="IPR017441">
    <property type="entry name" value="Protein_kinase_ATP_BS"/>
</dbReference>
<dbReference type="InterPro" id="IPR000494">
    <property type="entry name" value="Rcpt_L-dom"/>
</dbReference>
<dbReference type="InterPro" id="IPR036941">
    <property type="entry name" value="Rcpt_L-dom_sf"/>
</dbReference>
<dbReference type="InterPro" id="IPR050122">
    <property type="entry name" value="RTK"/>
</dbReference>
<dbReference type="InterPro" id="IPR001245">
    <property type="entry name" value="Ser-Thr/Tyr_kinase_cat_dom"/>
</dbReference>
<dbReference type="InterPro" id="IPR008266">
    <property type="entry name" value="Tyr_kinase_AS"/>
</dbReference>
<dbReference type="InterPro" id="IPR020635">
    <property type="entry name" value="Tyr_kinase_cat_dom"/>
</dbReference>
<dbReference type="InterPro" id="IPR016246">
    <property type="entry name" value="Tyr_kinase_insulin-like_rcpt"/>
</dbReference>
<dbReference type="InterPro" id="IPR002011">
    <property type="entry name" value="Tyr_kinase_rcpt_2_CS"/>
</dbReference>
<dbReference type="PANTHER" id="PTHR24416:SF106">
    <property type="entry name" value="INSULIN-LIKE GROWTH FACTOR 1 RECEPTOR"/>
    <property type="match status" value="1"/>
</dbReference>
<dbReference type="PANTHER" id="PTHR24416">
    <property type="entry name" value="TYROSINE-PROTEIN KINASE RECEPTOR"/>
    <property type="match status" value="1"/>
</dbReference>
<dbReference type="Pfam" id="PF00757">
    <property type="entry name" value="Furin-like"/>
    <property type="match status" value="1"/>
</dbReference>
<dbReference type="Pfam" id="PF07714">
    <property type="entry name" value="PK_Tyr_Ser-Thr"/>
    <property type="match status" value="1"/>
</dbReference>
<dbReference type="Pfam" id="PF01030">
    <property type="entry name" value="Recep_L_domain"/>
    <property type="match status" value="2"/>
</dbReference>
<dbReference type="PIRSF" id="PIRSF000620">
    <property type="entry name" value="Insulin_receptor"/>
    <property type="match status" value="1"/>
</dbReference>
<dbReference type="PRINTS" id="PR00109">
    <property type="entry name" value="TYRKINASE"/>
</dbReference>
<dbReference type="SMART" id="SM00060">
    <property type="entry name" value="FN3"/>
    <property type="match status" value="3"/>
</dbReference>
<dbReference type="SMART" id="SM00261">
    <property type="entry name" value="FU"/>
    <property type="match status" value="1"/>
</dbReference>
<dbReference type="SMART" id="SM00219">
    <property type="entry name" value="TyrKc"/>
    <property type="match status" value="1"/>
</dbReference>
<dbReference type="SUPFAM" id="SSF49265">
    <property type="entry name" value="Fibronectin type III"/>
    <property type="match status" value="3"/>
</dbReference>
<dbReference type="SUPFAM" id="SSF57184">
    <property type="entry name" value="Growth factor receptor domain"/>
    <property type="match status" value="1"/>
</dbReference>
<dbReference type="SUPFAM" id="SSF52058">
    <property type="entry name" value="L domain-like"/>
    <property type="match status" value="2"/>
</dbReference>
<dbReference type="SUPFAM" id="SSF56112">
    <property type="entry name" value="Protein kinase-like (PK-like)"/>
    <property type="match status" value="1"/>
</dbReference>
<dbReference type="PROSITE" id="PS50853">
    <property type="entry name" value="FN3"/>
    <property type="match status" value="3"/>
</dbReference>
<dbReference type="PROSITE" id="PS00107">
    <property type="entry name" value="PROTEIN_KINASE_ATP"/>
    <property type="match status" value="1"/>
</dbReference>
<dbReference type="PROSITE" id="PS50011">
    <property type="entry name" value="PROTEIN_KINASE_DOM"/>
    <property type="match status" value="1"/>
</dbReference>
<dbReference type="PROSITE" id="PS00109">
    <property type="entry name" value="PROTEIN_KINASE_TYR"/>
    <property type="match status" value="1"/>
</dbReference>
<dbReference type="PROSITE" id="PS00239">
    <property type="entry name" value="RECEPTOR_TYR_KIN_II"/>
    <property type="match status" value="1"/>
</dbReference>
<sequence>MKAELVPVCTAWILGLLLCLGPAAAKVCGPNMDIRNDVSELKQLRDCVVIEGYLQILLISNAKAEDFRNLRFPNLTVITDYLLLFRVSGLVSLSNLFPNLTVIRGRVLFYNYALVIFEMTDLKEIGLYNLRNITRGAVRIEKNSELCYVSTVDWSLVLDAVYNNYIVGNKPPKECVDLCPGAREKMQICEKSSINNEFADRCWSDEHCQKVCPSVCGKRACSDNNECCHPECLGSCTAPDNDTACVACHHYFYEGRCVPTCPSNTYKFEGWRCITREVCAKMHIWIHSTIPFIIHKGECVYECPSGYMLNKSQSMTCSPCEGPCPKICEEKMKTIDSVTSAQMLEGCTVLKGNLQLNIRKGQNIAAELENFLGLIETVTGYVKIRHSHALVSLSFLKSLRYILGEEQMPGNYSFYVFDNNNLQQLWDWSKHNLTIKEGKIRFAFNSKLCASEIYRMEEVTGTKGRQAEEDISLSTNGNMASCESHVLNFTSRSKIKNRIKLTWERYRPPDYRDLISFTVYYKEAPFRNVTEYDGQDACGSNSWNMVDVDLPASKESDPGILLQGLKPWTQYAIYVKAITLTMLENRHIHGAKSKIIYMRTDAAVPSIPQDMISASNSSSQLVVKWNPPSLPNGNLSYYIVRWQQQPQDRHLYQYNYCFKDKVPNRKYANGTIDTEGGTEPTKPEGSVGEKGHYCACPKTEAEEKAEKDEAEYRKVFENFLHNSIFVPRPNRRRRDVLAVGNSTVTSYEKNSTTEDFSNFSDSERDDIEYPFYETKVDYKWERTVISNLQPFTLYRIDIHSCNHEAEKLGCSASNFVFARTMPAAGADDIPGIVNTKEEDDGVIFLGWPEPLRPNGLILMYEIEYKHQGEVHRECVSRQDYRKNGGIKLVRLPPGNYSAQVQAISLYGNGSWTEMVSFCVKLKPDVRNNILQMVVAIPLALSFLLVGIISIVCFVFKKRNSNRLGNGVLYASVNPEYFSAAEMYVPDKWEVPREKITMNRELGQGSFGMVYEGIAKGVVKDEAETKVAIKTVNEAASMRERIEFLNEASVMKEFNCHHVVRLLGVVSQGQPTLVIMELMTRGDLKSYLRSLRPDTESNSGQPTPSLKKMIQMAGEIADGMSYLNANKFVHRDLAARNCMVTEDFTVKIGDFGMTRDIYETDYYRKGGKGLLPVRWMSPESLKDGVFTTNSDVWSFGVVLWEIATLAEQPYQGMSNEQVLRFVMEGGLLEKPDNCPDMLFELMRMCWQFNPKMRPSFLEIISSIKDELDPGFKEVSFFYSEENKPPDTEELDLEAENMESIPLDPSCALQNSEHHAGHKSENGPGVVVLRASFDERQPYAHMNGGRKNERALPLPQSSAC</sequence>
<reference evidence="13 14" key="1">
    <citation type="journal article" date="1998" name="Endocrinology">
        <title>Molecular cloning and characterization of Xenopus insulin-like growth factor-1 receptor: its role in mediating insulin-induced Xenopus oocyte maturation and expression during embryogenesis.</title>
        <authorList>
            <person name="Zhu L."/>
            <person name="Ohan N."/>
            <person name="Agazie Y."/>
            <person name="Cummings C."/>
            <person name="Farah S."/>
            <person name="Liu X.J."/>
        </authorList>
    </citation>
    <scope>NUCLEOTIDE SEQUENCE [MRNA]</scope>
    <scope>FUNCTION</scope>
    <scope>CATALYTIC ACTIVITY</scope>
    <scope>DEVELOPMENTAL STAGE</scope>
    <scope>AUTOPHOSPHORYLATION</scope>
    <source>
        <tissue evidence="11">Oocyte</tissue>
    </source>
</reference>
<reference evidence="13" key="2">
    <citation type="journal article" date="1991" name="Biochem. J.">
        <title>Insulin and insulin-like-growth-factor-I (IGF-I) receptors in Xenopus laevis oocytes. Comparison with insulin receptors from liver and muscle.</title>
        <authorList>
            <person name="Hainaut P."/>
            <person name="Kowalski A."/>
            <person name="Giorgetti S."/>
            <person name="Baron V."/>
            <person name="Van Obberghen E."/>
        </authorList>
    </citation>
    <scope>FUNCTION</scope>
    <scope>SUBCELLULAR LOCATION</scope>
    <scope>AUTOPHOSPHORYLATION</scope>
</reference>
<reference key="3">
    <citation type="journal article" date="2001" name="Dev. Cell">
        <title>Neural and head induction by insulin-like growth factor signals.</title>
        <authorList>
            <person name="Pera E.M."/>
            <person name="Wessely O."/>
            <person name="Li S.-Y."/>
            <person name="De Robertis E.M."/>
        </authorList>
    </citation>
    <scope>DEVELOPMENTAL STAGE</scope>
</reference>
<reference key="4">
    <citation type="journal article" date="2002" name="Dev. Biol.">
        <title>The IGF pathway regulates head formation by inhibiting Wnt signaling in Xenopus.</title>
        <authorList>
            <person name="Richard-Parpaillon L."/>
            <person name="Heligon C."/>
            <person name="Chesnel F."/>
            <person name="Boujard D."/>
            <person name="Philpott A."/>
        </authorList>
    </citation>
    <scope>FUNCTION</scope>
    <scope>DEVELOPMENTAL STAGE</scope>
</reference>
<protein>
    <recommendedName>
        <fullName>Insulin-like growth factor 1 receptor</fullName>
        <shortName>xIGF-1R</shortName>
        <shortName>xIGFR</shortName>
        <ecNumber>2.7.10.1</ecNumber>
    </recommendedName>
    <component>
        <recommendedName>
            <fullName>Insulin-like growth factor 1 receptor alpha chain</fullName>
        </recommendedName>
    </component>
    <component>
        <recommendedName>
            <fullName>Insulin-like growth factor 1 receptor beta chain</fullName>
        </recommendedName>
    </component>
</protein>
<keyword id="KW-0067">ATP-binding</keyword>
<keyword id="KW-1003">Cell membrane</keyword>
<keyword id="KW-0165">Cleavage on pair of basic residues</keyword>
<keyword id="KW-0217">Developmental protein</keyword>
<keyword id="KW-1015">Disulfide bond</keyword>
<keyword id="KW-0325">Glycoprotein</keyword>
<keyword id="KW-0418">Kinase</keyword>
<keyword id="KW-0464">Manganese</keyword>
<keyword id="KW-0472">Membrane</keyword>
<keyword id="KW-0479">Metal-binding</keyword>
<keyword id="KW-0547">Nucleotide-binding</keyword>
<keyword id="KW-0597">Phosphoprotein</keyword>
<keyword id="KW-0675">Receptor</keyword>
<keyword id="KW-1185">Reference proteome</keyword>
<keyword id="KW-0677">Repeat</keyword>
<keyword id="KW-0732">Signal</keyword>
<keyword id="KW-0808">Transferase</keyword>
<keyword id="KW-0812">Transmembrane</keyword>
<keyword id="KW-1133">Transmembrane helix</keyword>
<keyword id="KW-0829">Tyrosine-protein kinase</keyword>
<gene>
    <name type="primary">igf1r</name>
</gene>
<accession>O73798</accession>
<feature type="signal peptide" evidence="3">
    <location>
        <begin position="1"/>
        <end position="25"/>
    </location>
</feature>
<feature type="chain" id="PRO_0000045749" description="Insulin-like growth factor 1 receptor alpha chain" evidence="12">
    <location>
        <begin position="26"/>
        <end position="730"/>
    </location>
</feature>
<feature type="chain" id="PRO_0000045750" description="Insulin-like growth factor 1 receptor beta chain" evidence="12">
    <location>
        <begin position="735"/>
        <end position="1358"/>
    </location>
</feature>
<feature type="topological domain" description="Extracellular" evidence="3">
    <location>
        <begin position="735"/>
        <end position="934"/>
    </location>
</feature>
<feature type="transmembrane region" description="Helical" evidence="3">
    <location>
        <begin position="935"/>
        <end position="955"/>
    </location>
</feature>
<feature type="topological domain" description="Cytoplasmic" evidence="3">
    <location>
        <begin position="956"/>
        <end position="1358"/>
    </location>
</feature>
<feature type="domain" description="Fibronectin type-III 1" evidence="5">
    <location>
        <begin position="483"/>
        <end position="603"/>
    </location>
</feature>
<feature type="domain" description="Fibronectin type-III 2" evidence="5">
    <location>
        <begin position="604"/>
        <end position="702"/>
    </location>
</feature>
<feature type="domain" description="Fibronectin type-III 3" evidence="5">
    <location>
        <begin position="727"/>
        <end position="818"/>
    </location>
</feature>
<feature type="domain" description="Fibronectin type-III 4" evidence="5">
    <location>
        <begin position="829"/>
        <end position="924"/>
    </location>
</feature>
<feature type="domain" description="Protein kinase" evidence="4">
    <location>
        <begin position="995"/>
        <end position="1270"/>
    </location>
</feature>
<feature type="region of interest" description="Disordered" evidence="7">
    <location>
        <begin position="670"/>
        <end position="691"/>
    </location>
</feature>
<feature type="region of interest" description="Disordered" evidence="7">
    <location>
        <begin position="1336"/>
        <end position="1358"/>
    </location>
</feature>
<feature type="active site" description="Proton acceptor" evidence="2 4 6">
    <location>
        <position position="1131"/>
    </location>
</feature>
<feature type="binding site" evidence="2 4">
    <location>
        <begin position="1001"/>
        <end position="1009"/>
    </location>
    <ligand>
        <name>ATP</name>
        <dbReference type="ChEBI" id="CHEBI:30616"/>
    </ligand>
</feature>
<feature type="binding site" evidence="2 4">
    <location>
        <position position="1029"/>
    </location>
    <ligand>
        <name>ATP</name>
        <dbReference type="ChEBI" id="CHEBI:30616"/>
    </ligand>
</feature>
<feature type="modified residue" description="Phosphotyrosine; by autocatalysis" evidence="1">
    <location>
        <position position="976"/>
    </location>
</feature>
<feature type="modified residue" description="Phosphotyrosine; by autocatalysis" evidence="1">
    <location>
        <position position="1157"/>
    </location>
</feature>
<feature type="modified residue" description="Phosphotyrosine; by autocatalysis" evidence="1">
    <location>
        <position position="1161"/>
    </location>
</feature>
<feature type="modified residue" description="Phosphotyrosine; by autocatalysis" evidence="1">
    <location>
        <position position="1162"/>
    </location>
</feature>
<feature type="glycosylation site" description="N-linked (GlcNAc...) asparagine" evidence="3">
    <location>
        <position position="74"/>
    </location>
</feature>
<feature type="glycosylation site" description="N-linked (GlcNAc...) asparagine" evidence="3">
    <location>
        <position position="99"/>
    </location>
</feature>
<feature type="glycosylation site" description="N-linked (GlcNAc...) asparagine" evidence="3">
    <location>
        <position position="132"/>
    </location>
</feature>
<feature type="glycosylation site" description="N-linked (GlcNAc...) asparagine" evidence="3">
    <location>
        <position position="241"/>
    </location>
</feature>
<feature type="glycosylation site" description="N-linked (GlcNAc...) asparagine" evidence="3">
    <location>
        <position position="310"/>
    </location>
</feature>
<feature type="glycosylation site" description="N-linked (GlcNAc...) asparagine" evidence="3">
    <location>
        <position position="411"/>
    </location>
</feature>
<feature type="glycosylation site" description="N-linked (GlcNAc...) asparagine" evidence="3">
    <location>
        <position position="432"/>
    </location>
</feature>
<feature type="glycosylation site" description="N-linked (GlcNAc...) asparagine" evidence="3">
    <location>
        <position position="488"/>
    </location>
</feature>
<feature type="glycosylation site" description="N-linked (GlcNAc...) asparagine" evidence="3">
    <location>
        <position position="528"/>
    </location>
</feature>
<feature type="glycosylation site" description="N-linked (GlcNAc...) asparagine" evidence="3">
    <location>
        <position position="616"/>
    </location>
</feature>
<feature type="glycosylation site" description="N-linked (GlcNAc...) asparagine" evidence="3">
    <location>
        <position position="634"/>
    </location>
</feature>
<feature type="glycosylation site" description="N-linked (GlcNAc...) asparagine" evidence="3">
    <location>
        <position position="669"/>
    </location>
</feature>
<feature type="glycosylation site" description="N-linked (GlcNAc...) asparagine" evidence="3">
    <location>
        <position position="741"/>
    </location>
</feature>
<feature type="glycosylation site" description="N-linked (GlcNAc...) asparagine" evidence="3">
    <location>
        <position position="750"/>
    </location>
</feature>
<feature type="glycosylation site" description="N-linked (GlcNAc...) asparagine" evidence="3">
    <location>
        <position position="758"/>
    </location>
</feature>
<feature type="glycosylation site" description="N-linked (GlcNAc...) asparagine" evidence="3">
    <location>
        <position position="895"/>
    </location>
</feature>
<feature type="glycosylation site" description="N-linked (GlcNAc...) asparagine" evidence="3">
    <location>
        <position position="908"/>
    </location>
</feature>
<feature type="disulfide bond" evidence="2">
    <location>
        <begin position="28"/>
        <end position="47"/>
    </location>
</feature>
<feature type="disulfide bond" evidence="2">
    <location>
        <begin position="147"/>
        <end position="175"/>
    </location>
</feature>
<feature type="disulfide bond" evidence="2">
    <location>
        <begin position="179"/>
        <end position="202"/>
    </location>
</feature>
<feature type="disulfide bond" evidence="2">
    <location>
        <begin position="189"/>
        <end position="208"/>
    </location>
</feature>
<feature type="disulfide bond" evidence="2">
    <location>
        <begin position="212"/>
        <end position="221"/>
    </location>
</feature>
<feature type="disulfide bond" evidence="2">
    <location>
        <begin position="216"/>
        <end position="227"/>
    </location>
</feature>
<feature type="disulfide bond" evidence="2">
    <location>
        <begin position="228"/>
        <end position="236"/>
    </location>
</feature>
<feature type="disulfide bond" evidence="2">
    <location>
        <begin position="232"/>
        <end position="245"/>
    </location>
</feature>
<feature type="disulfide bond" evidence="2">
    <location>
        <begin position="248"/>
        <end position="257"/>
    </location>
</feature>
<feature type="disulfide bond" evidence="2">
    <location>
        <begin position="261"/>
        <end position="273"/>
    </location>
</feature>
<feature type="disulfide bond" evidence="2">
    <location>
        <begin position="279"/>
        <end position="299"/>
    </location>
</feature>
<feature type="disulfide bond" evidence="2">
    <location>
        <begin position="303"/>
        <end position="317"/>
    </location>
</feature>
<feature type="disulfide bond" evidence="2">
    <location>
        <begin position="320"/>
        <end position="324"/>
    </location>
</feature>
<feature type="disulfide bond" evidence="2">
    <location>
        <begin position="328"/>
        <end position="347"/>
    </location>
</feature>
<feature type="disulfide bond" evidence="2">
    <location>
        <begin position="449"/>
        <end position="482"/>
    </location>
</feature>
<name>IGF1R_XENLA</name>
<proteinExistence type="evidence at protein level"/>
<organism>
    <name type="scientific">Xenopus laevis</name>
    <name type="common">African clawed frog</name>
    <dbReference type="NCBI Taxonomy" id="8355"/>
    <lineage>
        <taxon>Eukaryota</taxon>
        <taxon>Metazoa</taxon>
        <taxon>Chordata</taxon>
        <taxon>Craniata</taxon>
        <taxon>Vertebrata</taxon>
        <taxon>Euteleostomi</taxon>
        <taxon>Amphibia</taxon>
        <taxon>Batrachia</taxon>
        <taxon>Anura</taxon>
        <taxon>Pipoidea</taxon>
        <taxon>Pipidae</taxon>
        <taxon>Xenopodinae</taxon>
        <taxon>Xenopus</taxon>
        <taxon>Xenopus</taxon>
    </lineage>
</organism>
<evidence type="ECO:0000250" key="1"/>
<evidence type="ECO:0000250" key="2">
    <source>
        <dbReference type="UniProtKB" id="P08069"/>
    </source>
</evidence>
<evidence type="ECO:0000255" key="3"/>
<evidence type="ECO:0000255" key="4">
    <source>
        <dbReference type="PROSITE-ProRule" id="PRU00159"/>
    </source>
</evidence>
<evidence type="ECO:0000255" key="5">
    <source>
        <dbReference type="PROSITE-ProRule" id="PRU00316"/>
    </source>
</evidence>
<evidence type="ECO:0000255" key="6">
    <source>
        <dbReference type="PROSITE-ProRule" id="PRU10028"/>
    </source>
</evidence>
<evidence type="ECO:0000256" key="7">
    <source>
        <dbReference type="SAM" id="MobiDB-lite"/>
    </source>
</evidence>
<evidence type="ECO:0000269" key="8">
    <source>
    </source>
</evidence>
<evidence type="ECO:0000269" key="9">
    <source>
    </source>
</evidence>
<evidence type="ECO:0000269" key="10">
    <source>
    </source>
</evidence>
<evidence type="ECO:0000269" key="11">
    <source>
    </source>
</evidence>
<evidence type="ECO:0000303" key="12">
    <source>
    </source>
</evidence>
<evidence type="ECO:0000305" key="13"/>
<evidence type="ECO:0000312" key="14">
    <source>
        <dbReference type="EMBL" id="AAC12942.1"/>
    </source>
</evidence>